<reference key="1">
    <citation type="submission" date="2007-05" db="EMBL/GenBank/DDBJ databases">
        <title>Complete sequence of Pseudomonas putida F1.</title>
        <authorList>
            <consortium name="US DOE Joint Genome Institute"/>
            <person name="Copeland A."/>
            <person name="Lucas S."/>
            <person name="Lapidus A."/>
            <person name="Barry K."/>
            <person name="Detter J.C."/>
            <person name="Glavina del Rio T."/>
            <person name="Hammon N."/>
            <person name="Israni S."/>
            <person name="Dalin E."/>
            <person name="Tice H."/>
            <person name="Pitluck S."/>
            <person name="Chain P."/>
            <person name="Malfatti S."/>
            <person name="Shin M."/>
            <person name="Vergez L."/>
            <person name="Schmutz J."/>
            <person name="Larimer F."/>
            <person name="Land M."/>
            <person name="Hauser L."/>
            <person name="Kyrpides N."/>
            <person name="Lykidis A."/>
            <person name="Parales R."/>
            <person name="Richardson P."/>
        </authorList>
    </citation>
    <scope>NUCLEOTIDE SEQUENCE [LARGE SCALE GENOMIC DNA]</scope>
    <source>
        <strain>ATCC 700007 / DSM 6899 / JCM 31910 / BCRC 17059 / LMG 24140 / F1</strain>
    </source>
</reference>
<dbReference type="EC" id="1.17.1.8" evidence="1"/>
<dbReference type="EMBL" id="CP000712">
    <property type="protein sequence ID" value="ABQ80711.1"/>
    <property type="molecule type" value="Genomic_DNA"/>
</dbReference>
<dbReference type="SMR" id="A5W9A1"/>
<dbReference type="KEGG" id="ppf:Pput_4591"/>
<dbReference type="eggNOG" id="COG0289">
    <property type="taxonomic scope" value="Bacteria"/>
</dbReference>
<dbReference type="HOGENOM" id="CLU_047479_2_1_6"/>
<dbReference type="UniPathway" id="UPA00034">
    <property type="reaction ID" value="UER00018"/>
</dbReference>
<dbReference type="GO" id="GO:0005829">
    <property type="term" value="C:cytosol"/>
    <property type="evidence" value="ECO:0007669"/>
    <property type="project" value="TreeGrafter"/>
</dbReference>
<dbReference type="GO" id="GO:0008839">
    <property type="term" value="F:4-hydroxy-tetrahydrodipicolinate reductase"/>
    <property type="evidence" value="ECO:0007669"/>
    <property type="project" value="UniProtKB-EC"/>
</dbReference>
<dbReference type="GO" id="GO:0051287">
    <property type="term" value="F:NAD binding"/>
    <property type="evidence" value="ECO:0007669"/>
    <property type="project" value="UniProtKB-UniRule"/>
</dbReference>
<dbReference type="GO" id="GO:0050661">
    <property type="term" value="F:NADP binding"/>
    <property type="evidence" value="ECO:0007669"/>
    <property type="project" value="UniProtKB-UniRule"/>
</dbReference>
<dbReference type="GO" id="GO:0016726">
    <property type="term" value="F:oxidoreductase activity, acting on CH or CH2 groups, NAD or NADP as acceptor"/>
    <property type="evidence" value="ECO:0007669"/>
    <property type="project" value="UniProtKB-UniRule"/>
</dbReference>
<dbReference type="GO" id="GO:0019877">
    <property type="term" value="P:diaminopimelate biosynthetic process"/>
    <property type="evidence" value="ECO:0007669"/>
    <property type="project" value="UniProtKB-UniRule"/>
</dbReference>
<dbReference type="GO" id="GO:0009089">
    <property type="term" value="P:lysine biosynthetic process via diaminopimelate"/>
    <property type="evidence" value="ECO:0007669"/>
    <property type="project" value="UniProtKB-UniRule"/>
</dbReference>
<dbReference type="CDD" id="cd02274">
    <property type="entry name" value="DHDPR_N"/>
    <property type="match status" value="1"/>
</dbReference>
<dbReference type="FunFam" id="3.30.360.10:FF:000004">
    <property type="entry name" value="4-hydroxy-tetrahydrodipicolinate reductase"/>
    <property type="match status" value="1"/>
</dbReference>
<dbReference type="FunFam" id="3.40.50.720:FF:000048">
    <property type="entry name" value="4-hydroxy-tetrahydrodipicolinate reductase"/>
    <property type="match status" value="1"/>
</dbReference>
<dbReference type="Gene3D" id="3.30.360.10">
    <property type="entry name" value="Dihydrodipicolinate Reductase, domain 2"/>
    <property type="match status" value="1"/>
</dbReference>
<dbReference type="Gene3D" id="3.40.50.720">
    <property type="entry name" value="NAD(P)-binding Rossmann-like Domain"/>
    <property type="match status" value="1"/>
</dbReference>
<dbReference type="HAMAP" id="MF_00102">
    <property type="entry name" value="DapB"/>
    <property type="match status" value="1"/>
</dbReference>
<dbReference type="InterPro" id="IPR022663">
    <property type="entry name" value="DapB_C"/>
</dbReference>
<dbReference type="InterPro" id="IPR000846">
    <property type="entry name" value="DapB_N"/>
</dbReference>
<dbReference type="InterPro" id="IPR022664">
    <property type="entry name" value="DapB_N_CS"/>
</dbReference>
<dbReference type="InterPro" id="IPR023940">
    <property type="entry name" value="DHDPR_bac"/>
</dbReference>
<dbReference type="InterPro" id="IPR036291">
    <property type="entry name" value="NAD(P)-bd_dom_sf"/>
</dbReference>
<dbReference type="NCBIfam" id="TIGR00036">
    <property type="entry name" value="dapB"/>
    <property type="match status" value="1"/>
</dbReference>
<dbReference type="PANTHER" id="PTHR20836:SF0">
    <property type="entry name" value="4-HYDROXY-TETRAHYDRODIPICOLINATE REDUCTASE 1, CHLOROPLASTIC-RELATED"/>
    <property type="match status" value="1"/>
</dbReference>
<dbReference type="PANTHER" id="PTHR20836">
    <property type="entry name" value="DIHYDRODIPICOLINATE REDUCTASE"/>
    <property type="match status" value="1"/>
</dbReference>
<dbReference type="Pfam" id="PF05173">
    <property type="entry name" value="DapB_C"/>
    <property type="match status" value="1"/>
</dbReference>
<dbReference type="Pfam" id="PF01113">
    <property type="entry name" value="DapB_N"/>
    <property type="match status" value="1"/>
</dbReference>
<dbReference type="PIRSF" id="PIRSF000161">
    <property type="entry name" value="DHPR"/>
    <property type="match status" value="1"/>
</dbReference>
<dbReference type="SUPFAM" id="SSF55347">
    <property type="entry name" value="Glyceraldehyde-3-phosphate dehydrogenase-like, C-terminal domain"/>
    <property type="match status" value="1"/>
</dbReference>
<dbReference type="SUPFAM" id="SSF51735">
    <property type="entry name" value="NAD(P)-binding Rossmann-fold domains"/>
    <property type="match status" value="1"/>
</dbReference>
<dbReference type="PROSITE" id="PS01298">
    <property type="entry name" value="DAPB"/>
    <property type="match status" value="1"/>
</dbReference>
<gene>
    <name evidence="1" type="primary">dapB</name>
    <name type="ordered locus">Pput_4591</name>
</gene>
<protein>
    <recommendedName>
        <fullName evidence="1">4-hydroxy-tetrahydrodipicolinate reductase</fullName>
        <shortName evidence="1">HTPA reductase</shortName>
        <ecNumber evidence="1">1.17.1.8</ecNumber>
    </recommendedName>
</protein>
<organism>
    <name type="scientific">Pseudomonas putida (strain ATCC 700007 / DSM 6899 / JCM 31910 / BCRC 17059 / LMG 24140 / F1)</name>
    <dbReference type="NCBI Taxonomy" id="351746"/>
    <lineage>
        <taxon>Bacteria</taxon>
        <taxon>Pseudomonadati</taxon>
        <taxon>Pseudomonadota</taxon>
        <taxon>Gammaproteobacteria</taxon>
        <taxon>Pseudomonadales</taxon>
        <taxon>Pseudomonadaceae</taxon>
        <taxon>Pseudomonas</taxon>
    </lineage>
</organism>
<accession>A5W9A1</accession>
<feature type="chain" id="PRO_1000008614" description="4-hydroxy-tetrahydrodipicolinate reductase">
    <location>
        <begin position="1"/>
        <end position="267"/>
    </location>
</feature>
<feature type="active site" description="Proton donor/acceptor" evidence="1">
    <location>
        <position position="155"/>
    </location>
</feature>
<feature type="active site" description="Proton donor" evidence="1">
    <location>
        <position position="159"/>
    </location>
</feature>
<feature type="binding site" evidence="1">
    <location>
        <begin position="8"/>
        <end position="13"/>
    </location>
    <ligand>
        <name>NAD(+)</name>
        <dbReference type="ChEBI" id="CHEBI:57540"/>
    </ligand>
</feature>
<feature type="binding site" evidence="1">
    <location>
        <position position="34"/>
    </location>
    <ligand>
        <name>NAD(+)</name>
        <dbReference type="ChEBI" id="CHEBI:57540"/>
    </ligand>
</feature>
<feature type="binding site" evidence="1">
    <location>
        <position position="35"/>
    </location>
    <ligand>
        <name>NADP(+)</name>
        <dbReference type="ChEBI" id="CHEBI:58349"/>
    </ligand>
</feature>
<feature type="binding site" evidence="1">
    <location>
        <begin position="98"/>
        <end position="100"/>
    </location>
    <ligand>
        <name>NAD(+)</name>
        <dbReference type="ChEBI" id="CHEBI:57540"/>
    </ligand>
</feature>
<feature type="binding site" evidence="1">
    <location>
        <begin position="122"/>
        <end position="125"/>
    </location>
    <ligand>
        <name>NAD(+)</name>
        <dbReference type="ChEBI" id="CHEBI:57540"/>
    </ligand>
</feature>
<feature type="binding site" evidence="1">
    <location>
        <position position="156"/>
    </location>
    <ligand>
        <name>(S)-2,3,4,5-tetrahydrodipicolinate</name>
        <dbReference type="ChEBI" id="CHEBI:16845"/>
    </ligand>
</feature>
<feature type="binding site" evidence="1">
    <location>
        <begin position="165"/>
        <end position="166"/>
    </location>
    <ligand>
        <name>(S)-2,3,4,5-tetrahydrodipicolinate</name>
        <dbReference type="ChEBI" id="CHEBI:16845"/>
    </ligand>
</feature>
<name>DAPB_PSEP1</name>
<comment type="function">
    <text evidence="1">Catalyzes the conversion of 4-hydroxy-tetrahydrodipicolinate (HTPA) to tetrahydrodipicolinate.</text>
</comment>
<comment type="catalytic activity">
    <reaction evidence="1">
        <text>(S)-2,3,4,5-tetrahydrodipicolinate + NAD(+) + H2O = (2S,4S)-4-hydroxy-2,3,4,5-tetrahydrodipicolinate + NADH + H(+)</text>
        <dbReference type="Rhea" id="RHEA:35323"/>
        <dbReference type="ChEBI" id="CHEBI:15377"/>
        <dbReference type="ChEBI" id="CHEBI:15378"/>
        <dbReference type="ChEBI" id="CHEBI:16845"/>
        <dbReference type="ChEBI" id="CHEBI:57540"/>
        <dbReference type="ChEBI" id="CHEBI:57945"/>
        <dbReference type="ChEBI" id="CHEBI:67139"/>
        <dbReference type="EC" id="1.17.1.8"/>
    </reaction>
</comment>
<comment type="catalytic activity">
    <reaction evidence="1">
        <text>(S)-2,3,4,5-tetrahydrodipicolinate + NADP(+) + H2O = (2S,4S)-4-hydroxy-2,3,4,5-tetrahydrodipicolinate + NADPH + H(+)</text>
        <dbReference type="Rhea" id="RHEA:35331"/>
        <dbReference type="ChEBI" id="CHEBI:15377"/>
        <dbReference type="ChEBI" id="CHEBI:15378"/>
        <dbReference type="ChEBI" id="CHEBI:16845"/>
        <dbReference type="ChEBI" id="CHEBI:57783"/>
        <dbReference type="ChEBI" id="CHEBI:58349"/>
        <dbReference type="ChEBI" id="CHEBI:67139"/>
        <dbReference type="EC" id="1.17.1.8"/>
    </reaction>
</comment>
<comment type="pathway">
    <text evidence="1">Amino-acid biosynthesis; L-lysine biosynthesis via DAP pathway; (S)-tetrahydrodipicolinate from L-aspartate: step 4/4.</text>
</comment>
<comment type="subcellular location">
    <subcellularLocation>
        <location evidence="1">Cytoplasm</location>
    </subcellularLocation>
</comment>
<comment type="similarity">
    <text evidence="1">Belongs to the DapB family.</text>
</comment>
<comment type="caution">
    <text evidence="2">Was originally thought to be a dihydrodipicolinate reductase (DHDPR), catalyzing the conversion of dihydrodipicolinate to tetrahydrodipicolinate. However, it was shown in E.coli that the substrate of the enzymatic reaction is not dihydrodipicolinate (DHDP) but in fact (2S,4S)-4-hydroxy-2,3,4,5-tetrahydrodipicolinic acid (HTPA), the product released by the DapA-catalyzed reaction.</text>
</comment>
<keyword id="KW-0028">Amino-acid biosynthesis</keyword>
<keyword id="KW-0963">Cytoplasm</keyword>
<keyword id="KW-0220">Diaminopimelate biosynthesis</keyword>
<keyword id="KW-0457">Lysine biosynthesis</keyword>
<keyword id="KW-0520">NAD</keyword>
<keyword id="KW-0521">NADP</keyword>
<keyword id="KW-0560">Oxidoreductase</keyword>
<proteinExistence type="inferred from homology"/>
<evidence type="ECO:0000255" key="1">
    <source>
        <dbReference type="HAMAP-Rule" id="MF_00102"/>
    </source>
</evidence>
<evidence type="ECO:0000305" key="2"/>
<sequence length="267" mass="28414">MRRIAVMGAAGRMGKTLIEAVQQTSGAGLTAAIDRPDSSLVGADAGELAALGRIGVLLSDDLAKVADEFDVLIDFTHPSVTLKNLAFCRKHGKAMIIGTTGFTVEEKQLLAEAGKDIPIVFAANFSVGVNLSLKLLDMAARVLGDDVDIEIIEAHHRHKVDAPSGTALRMGEVVANALGRDLQEVAVYGREGQTGARDRKTIGFATVRAGDVVGDHTVLFAAEGERLEITHKASSRMTFAKGAVRAALWLDGREPGLYDMQDVLELR</sequence>